<accession>B6JP50</accession>
<protein>
    <recommendedName>
        <fullName evidence="1">Na(+)/H(+) antiporter NhaA</fullName>
    </recommendedName>
    <alternativeName>
        <fullName evidence="1">Sodium/proton antiporter NhaA</fullName>
    </alternativeName>
</protein>
<organism>
    <name type="scientific">Helicobacter pylori (strain P12)</name>
    <dbReference type="NCBI Taxonomy" id="570508"/>
    <lineage>
        <taxon>Bacteria</taxon>
        <taxon>Pseudomonadati</taxon>
        <taxon>Campylobacterota</taxon>
        <taxon>Epsilonproteobacteria</taxon>
        <taxon>Campylobacterales</taxon>
        <taxon>Helicobacteraceae</taxon>
        <taxon>Helicobacter</taxon>
    </lineage>
</organism>
<comment type="function">
    <text evidence="1">Na(+)/H(+) antiporter that extrudes sodium in exchange for external protons.</text>
</comment>
<comment type="catalytic activity">
    <reaction evidence="1">
        <text>Na(+)(in) + 2 H(+)(out) = Na(+)(out) + 2 H(+)(in)</text>
        <dbReference type="Rhea" id="RHEA:29251"/>
        <dbReference type="ChEBI" id="CHEBI:15378"/>
        <dbReference type="ChEBI" id="CHEBI:29101"/>
    </reaction>
    <physiologicalReaction direction="left-to-right" evidence="1">
        <dbReference type="Rhea" id="RHEA:29252"/>
    </physiologicalReaction>
</comment>
<comment type="subcellular location">
    <subcellularLocation>
        <location evidence="1">Cell inner membrane</location>
        <topology evidence="1">Multi-pass membrane protein</topology>
    </subcellularLocation>
</comment>
<comment type="similarity">
    <text evidence="1">Belongs to the NhaA Na(+)/H(+) (TC 2.A.33) antiporter family.</text>
</comment>
<keyword id="KW-0050">Antiport</keyword>
<keyword id="KW-0997">Cell inner membrane</keyword>
<keyword id="KW-1003">Cell membrane</keyword>
<keyword id="KW-0406">Ion transport</keyword>
<keyword id="KW-0472">Membrane</keyword>
<keyword id="KW-0915">Sodium</keyword>
<keyword id="KW-0739">Sodium transport</keyword>
<keyword id="KW-0812">Transmembrane</keyword>
<keyword id="KW-1133">Transmembrane helix</keyword>
<keyword id="KW-0813">Transport</keyword>
<dbReference type="EMBL" id="CP001217">
    <property type="protein sequence ID" value="ACJ08678.1"/>
    <property type="molecule type" value="Genomic_DNA"/>
</dbReference>
<dbReference type="SMR" id="B6JP50"/>
<dbReference type="KEGG" id="hpp:HPP12_1532"/>
<dbReference type="HOGENOM" id="CLU_015803_1_2_7"/>
<dbReference type="Proteomes" id="UP000008198">
    <property type="component" value="Chromosome"/>
</dbReference>
<dbReference type="GO" id="GO:0005886">
    <property type="term" value="C:plasma membrane"/>
    <property type="evidence" value="ECO:0007669"/>
    <property type="project" value="UniProtKB-SubCell"/>
</dbReference>
<dbReference type="GO" id="GO:0015385">
    <property type="term" value="F:sodium:proton antiporter activity"/>
    <property type="evidence" value="ECO:0007669"/>
    <property type="project" value="TreeGrafter"/>
</dbReference>
<dbReference type="GO" id="GO:0006885">
    <property type="term" value="P:regulation of pH"/>
    <property type="evidence" value="ECO:0007669"/>
    <property type="project" value="InterPro"/>
</dbReference>
<dbReference type="Gene3D" id="1.20.1530.10">
    <property type="entry name" value="Na+/H+ antiporter like domain"/>
    <property type="match status" value="1"/>
</dbReference>
<dbReference type="HAMAP" id="MF_01844">
    <property type="entry name" value="NhaA"/>
    <property type="match status" value="1"/>
</dbReference>
<dbReference type="InterPro" id="IPR023171">
    <property type="entry name" value="Na/H_antiporter_dom_sf"/>
</dbReference>
<dbReference type="InterPro" id="IPR004670">
    <property type="entry name" value="NhaA"/>
</dbReference>
<dbReference type="NCBIfam" id="TIGR00773">
    <property type="entry name" value="NhaA"/>
    <property type="match status" value="1"/>
</dbReference>
<dbReference type="NCBIfam" id="NF011428">
    <property type="entry name" value="PRK14856.1"/>
    <property type="match status" value="1"/>
</dbReference>
<dbReference type="PANTHER" id="PTHR30341:SF0">
    <property type="entry name" value="NA(+)_H(+) ANTIPORTER NHAA"/>
    <property type="match status" value="1"/>
</dbReference>
<dbReference type="PANTHER" id="PTHR30341">
    <property type="entry name" value="SODIUM ION/PROTON ANTIPORTER NHAA-RELATED"/>
    <property type="match status" value="1"/>
</dbReference>
<dbReference type="Pfam" id="PF06965">
    <property type="entry name" value="Na_H_antiport_1"/>
    <property type="match status" value="1"/>
</dbReference>
<proteinExistence type="inferred from homology"/>
<sequence>MNLKKTENALSLTLKNFIKSESFGGIFLFLNAVLAMVVANSFLKESYFALWHTPFGFQIGDFFIGFSLHNWIDDVLMALFFLMIGLEIKRELLFGELSSFKKASFPVIAALGGMIAPGLIYFFLNADTPSQHGFGIPMATDIAFALGVIMLLGKRVPTALKVFLITLAVADDLGAIIVIALFYTTNLKFAWLLGALGVVLLLALLNRLNMRSLVPYLLLGVLLWFCVHQSGIHATIAAVVLAFMIPVKIPKDSKNVELLELGKRYAETSSGALLTKEQQEILHSIEEKASALQSPLERLEHFLAPISGYFIMPLFAFANAGVSVDSSINLEVDKVLFGVILGLCLGKPLGIFLITFISEKLKITARPKGISWWHILGAGLLAGIGFTMSMFISNLAFTSEHKDAMEVAKIAILLGSLISGIIGALYLFALDKRAALKK</sequence>
<reference key="1">
    <citation type="submission" date="2008-10" db="EMBL/GenBank/DDBJ databases">
        <title>The complete genome sequence of Helicobacter pylori strain P12.</title>
        <authorList>
            <person name="Fischer W."/>
            <person name="Windhager L."/>
            <person name="Karnholz A."/>
            <person name="Zeiller M."/>
            <person name="Zimmer R."/>
            <person name="Haas R."/>
        </authorList>
    </citation>
    <scope>NUCLEOTIDE SEQUENCE [LARGE SCALE GENOMIC DNA]</scope>
    <source>
        <strain>P12</strain>
    </source>
</reference>
<name>NHAA_HELP2</name>
<gene>
    <name evidence="1" type="primary">nhaA</name>
    <name type="ordered locus">HPP12_1532</name>
</gene>
<feature type="chain" id="PRO_1000188437" description="Na(+)/H(+) antiporter NhaA">
    <location>
        <begin position="1"/>
        <end position="438"/>
    </location>
</feature>
<feature type="transmembrane region" description="Helical" evidence="1">
    <location>
        <begin position="23"/>
        <end position="43"/>
    </location>
</feature>
<feature type="transmembrane region" description="Helical" evidence="1">
    <location>
        <begin position="62"/>
        <end position="82"/>
    </location>
</feature>
<feature type="transmembrane region" description="Helical" evidence="1">
    <location>
        <begin position="104"/>
        <end position="124"/>
    </location>
</feature>
<feature type="transmembrane region" description="Helical" evidence="1">
    <location>
        <begin position="133"/>
        <end position="153"/>
    </location>
</feature>
<feature type="transmembrane region" description="Helical" evidence="1">
    <location>
        <begin position="162"/>
        <end position="182"/>
    </location>
</feature>
<feature type="transmembrane region" description="Helical" evidence="1">
    <location>
        <begin position="185"/>
        <end position="205"/>
    </location>
</feature>
<feature type="transmembrane region" description="Helical" evidence="1">
    <location>
        <begin position="221"/>
        <end position="241"/>
    </location>
</feature>
<feature type="transmembrane region" description="Helical" evidence="1">
    <location>
        <begin position="302"/>
        <end position="322"/>
    </location>
</feature>
<feature type="transmembrane region" description="Helical" evidence="1">
    <location>
        <begin position="337"/>
        <end position="357"/>
    </location>
</feature>
<feature type="transmembrane region" description="Helical" evidence="1">
    <location>
        <begin position="372"/>
        <end position="392"/>
    </location>
</feature>
<feature type="transmembrane region" description="Helical" evidence="1">
    <location>
        <begin position="410"/>
        <end position="430"/>
    </location>
</feature>
<evidence type="ECO:0000255" key="1">
    <source>
        <dbReference type="HAMAP-Rule" id="MF_01844"/>
    </source>
</evidence>